<evidence type="ECO:0000250" key="1"/>
<evidence type="ECO:0000256" key="2">
    <source>
        <dbReference type="SAM" id="MobiDB-lite"/>
    </source>
</evidence>
<evidence type="ECO:0000305" key="3"/>
<comment type="function">
    <text evidence="1">CPSF plays a key role in pre-mRNA 3'-end formation, recognizing the AAUAAA signal sequence and interacting with poly(A)polymerase and other factors to bring about cleavage and poly(A) addition. This subunit is involved in the RNA recognition step of the polyadenylation reaction (By similarity).</text>
</comment>
<comment type="subunit">
    <text evidence="1">CPSF is a heterotetramer composed of four distinct subunits 160 (cpsf-1), 100 (cpsf-2), 70 (cpsf-3), and 30 kDa (cpsf-4).</text>
</comment>
<comment type="subcellular location">
    <subcellularLocation>
        <location evidence="1">Nucleus</location>
    </subcellularLocation>
</comment>
<comment type="similarity">
    <text evidence="3">Belongs to the CPSF1 family.</text>
</comment>
<gene>
    <name type="primary">cpsf-1</name>
    <name type="ORF">Y76B12C.7</name>
</gene>
<sequence length="1454" mass="162716">MYGYLRETDDSTAINFSAYGKFLPGENTGFQLLTIGAKFIRIFRVNPYVLKEPGEDNEEWQQKTKLECMFSCRLLNKCHSIAVARVPQLPDQDSILMTFDDAKLSIVSINEKERNMQTISLHAFENEYLRDGFINHFQPPLVRSDPSNRCAACLVYGKHIAILPFHENSKRIHSYVIPLKQIDPRLDNIADMVFLDGYYEPTILFLYEPIQTTPGRACVRYDTMCIMGVSVNIVDRQFAVVWQTANLPMDCSQLLPIPKPLGGALVFGSNTVVYLNQAVPPCGLVLNSCYDGFTKFPLKDLKHLKMTLDCSTSVYMEDGRIAVGSRDGDLFLLRLMTSSGGGTVKSLEFSKVYETSIAYSLTVCAPGHLFVGSRLGDSQLLEYTLLKTTRDCAVKRLKIDNKDPAAAEIELDEDDMELYGGAIEEQQNDDDEQIDESLQFRELDRLRNVGPVKSMCVGRPNYMSNDLVDAKRRDPVFDLVTASGHGKNGALCVHQRSLRPEIITSSLLEGAEQLWAVGRKENESHKYLIVSRVRSTLILELGEELVELEEQLFVTGEPTVAAGELSQGALAVQVTSTCIALVTDGQQMQEVHIDSNFPVIQASIVDPYVALLTQNGRLLLYELVMEPYVQLREVDISATSFATWHATAQNLTQLTSISIYADASEIMKFAAAEKSMGGGGGGDGEVSTAENAMMKKEQHEEAILLHGEDDDFLYGDEDETIMEQNFPVENGEATIKQSNTRKRKRLGHDAIQSSRGGEQSDAIDPTRTFSSISHWLIVSHENGRLSIHSLPEMEVVYQIGRFSNVPELLVDLTVEEEEKERKAKAQQAAKEASVPTDEAEQLNTEMKQLCERVLEAQIVGMGINQAHPILMAIVDEQVVLYEMFSSSNPIPGHLGISFRKLPHFICLRTSSHLNSDGKRAPFEMKINNGKRFSLIHPFERVSSVNNGVMIVGAVPTLLVYGAWGGMQTHQMTVDGPIKAFTPFNNENVLHGIVYMTQHKSELRIARMHPDFDYEMPYPVKKIEVGRTIHHVRYLMNSDVYAVVSSIPKPSNKIWVVMNDDKQEEIHEKDENFVLPAPPKYTLNLFSSQDWAAVPNTEISFEDMEAVTACEDVALKSESTISGLETLLAMGTVNNYGEEVLVRGRIILCEVIEVVPEPDQPTSNRKIKVLFDKEQKGPVTGLCAINGLLLCGMGQKVFIWQFKDNDLMGISFLDMHYYVYQLHSLRTIAIACDARESMSLIRFQEDNKAMSIASRDDRKCAQPPMASQLVVDGAHVGFLLSDETGNITMFNYAPEAPESNGGERLTVRAAINIGTNINAFVRLRGHTSLLQLNNEDEKEAIEQRMTTVFASLDGSFGFVRPLTEKSYRRLHFLQTFIGSVTPQIAGLHIKGSRSAKPSQPIVNGRNARNLIDGDVVEQYLHLSLYDKTDLARRLGVGRYHIIDDLMQLRRMAFYY</sequence>
<name>CPSF1_CAEEL</name>
<dbReference type="EMBL" id="FO081666">
    <property type="protein sequence ID" value="CCD73182.1"/>
    <property type="molecule type" value="Genomic_DNA"/>
</dbReference>
<dbReference type="RefSeq" id="NP_500157.2">
    <property type="nucleotide sequence ID" value="NM_067756.4"/>
</dbReference>
<dbReference type="SMR" id="Q9N4C2"/>
<dbReference type="BioGRID" id="42157">
    <property type="interactions" value="8"/>
</dbReference>
<dbReference type="FunCoup" id="Q9N4C2">
    <property type="interactions" value="3197"/>
</dbReference>
<dbReference type="IntAct" id="Q9N4C2">
    <property type="interactions" value="1"/>
</dbReference>
<dbReference type="MINT" id="Q9N4C2"/>
<dbReference type="STRING" id="6239.Y76B12C.7a.1"/>
<dbReference type="PaxDb" id="6239-Y76B12C.7a.2"/>
<dbReference type="PeptideAtlas" id="Q9N4C2"/>
<dbReference type="EnsemblMetazoa" id="Y76B12C.7a.1">
    <property type="protein sequence ID" value="Y76B12C.7a.1"/>
    <property type="gene ID" value="WBGene00022301"/>
</dbReference>
<dbReference type="GeneID" id="177003"/>
<dbReference type="KEGG" id="cel:CELE_Y76B12C.7"/>
<dbReference type="AGR" id="WB:WBGene00022301"/>
<dbReference type="CTD" id="177003"/>
<dbReference type="WormBase" id="Y76B12C.7a">
    <property type="protein sequence ID" value="CE29932"/>
    <property type="gene ID" value="WBGene00022301"/>
    <property type="gene designation" value="cpsf-1"/>
</dbReference>
<dbReference type="eggNOG" id="KOG1896">
    <property type="taxonomic scope" value="Eukaryota"/>
</dbReference>
<dbReference type="HOGENOM" id="CLU_002414_0_0_1"/>
<dbReference type="InParanoid" id="Q9N4C2"/>
<dbReference type="OMA" id="PMTKFKL"/>
<dbReference type="OrthoDB" id="6109at2759"/>
<dbReference type="PhylomeDB" id="Q9N4C2"/>
<dbReference type="Reactome" id="R-CEL-72187">
    <property type="pathway name" value="mRNA 3'-end processing"/>
</dbReference>
<dbReference type="Reactome" id="R-CEL-72203">
    <property type="pathway name" value="Processing of Capped Intron-Containing Pre-mRNA"/>
</dbReference>
<dbReference type="Reactome" id="R-CEL-73856">
    <property type="pathway name" value="RNA Polymerase II Transcription Termination"/>
</dbReference>
<dbReference type="Reactome" id="R-CEL-77595">
    <property type="pathway name" value="Processing of Intronless Pre-mRNAs"/>
</dbReference>
<dbReference type="PRO" id="PR:Q9N4C2"/>
<dbReference type="Proteomes" id="UP000001940">
    <property type="component" value="Chromosome IV"/>
</dbReference>
<dbReference type="Bgee" id="WBGene00022301">
    <property type="expression patterns" value="Expressed in adult organism and 4 other cell types or tissues"/>
</dbReference>
<dbReference type="ExpressionAtlas" id="Q9N4C2">
    <property type="expression patterns" value="baseline and differential"/>
</dbReference>
<dbReference type="GO" id="GO:0005847">
    <property type="term" value="C:mRNA cleavage and polyadenylation specificity factor complex"/>
    <property type="evidence" value="ECO:0000318"/>
    <property type="project" value="GO_Central"/>
</dbReference>
<dbReference type="GO" id="GO:0005634">
    <property type="term" value="C:nucleus"/>
    <property type="evidence" value="ECO:0000318"/>
    <property type="project" value="GO_Central"/>
</dbReference>
<dbReference type="GO" id="GO:0003723">
    <property type="term" value="F:RNA binding"/>
    <property type="evidence" value="ECO:0007669"/>
    <property type="project" value="UniProtKB-KW"/>
</dbReference>
<dbReference type="GO" id="GO:0006397">
    <property type="term" value="P:mRNA processing"/>
    <property type="evidence" value="ECO:0007669"/>
    <property type="project" value="UniProtKB-KW"/>
</dbReference>
<dbReference type="FunFam" id="2.130.10.10:FF:002090">
    <property type="entry name" value="Probable cleavage and polyadenylation specificity factor subunit 1"/>
    <property type="match status" value="1"/>
</dbReference>
<dbReference type="FunFam" id="2.130.10.10:FF:003219">
    <property type="entry name" value="Probable cleavage and polyadenylation specificity factor subunit 1"/>
    <property type="match status" value="1"/>
</dbReference>
<dbReference type="Gene3D" id="2.130.10.10">
    <property type="entry name" value="YVTN repeat-like/Quinoprotein amine dehydrogenase"/>
    <property type="match status" value="3"/>
</dbReference>
<dbReference type="InterPro" id="IPR018846">
    <property type="entry name" value="Beta-prop_RSE1/DDB1/CPSF1_1st"/>
</dbReference>
<dbReference type="InterPro" id="IPR004871">
    <property type="entry name" value="Cleavage/polyA-sp_fac_asu_C"/>
</dbReference>
<dbReference type="InterPro" id="IPR050358">
    <property type="entry name" value="RSE1/DDB1/CFT1/CPSF1"/>
</dbReference>
<dbReference type="InterPro" id="IPR015943">
    <property type="entry name" value="WD40/YVTN_repeat-like_dom_sf"/>
</dbReference>
<dbReference type="PANTHER" id="PTHR10644">
    <property type="entry name" value="DNA REPAIR/RNA PROCESSING CPSF FAMILY"/>
    <property type="match status" value="1"/>
</dbReference>
<dbReference type="Pfam" id="PF10433">
    <property type="entry name" value="Beta-prop_RSE1_1st"/>
    <property type="match status" value="1"/>
</dbReference>
<dbReference type="Pfam" id="PF23726">
    <property type="entry name" value="Beta-prop_RSE1_2nd"/>
    <property type="match status" value="1"/>
</dbReference>
<dbReference type="Pfam" id="PF03178">
    <property type="entry name" value="CPSF_A"/>
    <property type="match status" value="1"/>
</dbReference>
<feature type="chain" id="PRO_0000074390" description="Probable cleavage and polyadenylation specificity factor subunit 1">
    <location>
        <begin position="1"/>
        <end position="1454"/>
    </location>
</feature>
<feature type="region of interest" description="Disordered" evidence="2">
    <location>
        <begin position="736"/>
        <end position="765"/>
    </location>
</feature>
<organism>
    <name type="scientific">Caenorhabditis elegans</name>
    <dbReference type="NCBI Taxonomy" id="6239"/>
    <lineage>
        <taxon>Eukaryota</taxon>
        <taxon>Metazoa</taxon>
        <taxon>Ecdysozoa</taxon>
        <taxon>Nematoda</taxon>
        <taxon>Chromadorea</taxon>
        <taxon>Rhabditida</taxon>
        <taxon>Rhabditina</taxon>
        <taxon>Rhabditomorpha</taxon>
        <taxon>Rhabditoidea</taxon>
        <taxon>Rhabditidae</taxon>
        <taxon>Peloderinae</taxon>
        <taxon>Caenorhabditis</taxon>
    </lineage>
</organism>
<accession>Q9N4C2</accession>
<proteinExistence type="inferred from homology"/>
<reference key="1">
    <citation type="journal article" date="1998" name="Science">
        <title>Genome sequence of the nematode C. elegans: a platform for investigating biology.</title>
        <authorList>
            <consortium name="The C. elegans sequencing consortium"/>
        </authorList>
    </citation>
    <scope>NUCLEOTIDE SEQUENCE [LARGE SCALE GENOMIC DNA]</scope>
    <source>
        <strain>Bristol N2</strain>
    </source>
</reference>
<reference key="2">
    <citation type="journal article" date="2008" name="Proc. Natl. Acad. Sci. U.S.A.">
        <title>Genes involved in pre-mRNA 3'-end formation and transcription termination revealed by a lin-15 operon Muv suppressor screen.</title>
        <authorList>
            <person name="Cui M."/>
            <person name="Allen M.A."/>
            <person name="Larsen A."/>
            <person name="Macmorris M."/>
            <person name="Han M."/>
            <person name="Blumenthal T."/>
        </authorList>
    </citation>
    <scope>IDENTIFICATION</scope>
</reference>
<keyword id="KW-0507">mRNA processing</keyword>
<keyword id="KW-0539">Nucleus</keyword>
<keyword id="KW-1185">Reference proteome</keyword>
<keyword id="KW-0694">RNA-binding</keyword>
<protein>
    <recommendedName>
        <fullName>Probable cleavage and polyadenylation specificity factor subunit 1</fullName>
    </recommendedName>
    <alternativeName>
        <fullName>Cleavage and polyadenylation specificity factor 160 kDa subunit</fullName>
        <shortName>CPSF 160 kDa subunit</shortName>
    </alternativeName>
</protein>